<sequence>METLTAISRWLAKQHVVTWCVQHEGELWCANAFYLFDAQKVAFYVLTEEKTRHAQMSGPRAPVAGTVNGQPKTVARIRGIQFKGEIRKLEGEESDAARQAYLRRFPVARMLPAPVWEIRLDEIKFTDNTLGFGKKMHWLRSPIRSL</sequence>
<proteinExistence type="inferred from homology"/>
<gene>
    <name type="ordered locus">CKO_04548</name>
</gene>
<protein>
    <recommendedName>
        <fullName evidence="1">UPF0306 protein CKO_04548</fullName>
    </recommendedName>
</protein>
<comment type="similarity">
    <text evidence="1">Belongs to the UPF0306 family.</text>
</comment>
<dbReference type="EMBL" id="CP000822">
    <property type="protein sequence ID" value="ABV15602.1"/>
    <property type="molecule type" value="Genomic_DNA"/>
</dbReference>
<dbReference type="RefSeq" id="WP_012135284.1">
    <property type="nucleotide sequence ID" value="NC_009792.1"/>
</dbReference>
<dbReference type="SMR" id="A8AQ39"/>
<dbReference type="STRING" id="290338.CKO_04548"/>
<dbReference type="GeneID" id="45138098"/>
<dbReference type="KEGG" id="cko:CKO_04548"/>
<dbReference type="HOGENOM" id="CLU_105087_3_0_6"/>
<dbReference type="OrthoDB" id="8447155at2"/>
<dbReference type="Proteomes" id="UP000008148">
    <property type="component" value="Chromosome"/>
</dbReference>
<dbReference type="Gene3D" id="2.30.110.10">
    <property type="entry name" value="Electron Transport, Fmn-binding Protein, Chain A"/>
    <property type="match status" value="1"/>
</dbReference>
<dbReference type="HAMAP" id="MF_00764">
    <property type="entry name" value="UPF0306"/>
    <property type="match status" value="1"/>
</dbReference>
<dbReference type="InterPro" id="IPR012349">
    <property type="entry name" value="Split_barrel_FMN-bd"/>
</dbReference>
<dbReference type="InterPro" id="IPR011194">
    <property type="entry name" value="UPF0306"/>
</dbReference>
<dbReference type="NCBIfam" id="NF002900">
    <property type="entry name" value="PRK03467.1"/>
    <property type="match status" value="1"/>
</dbReference>
<dbReference type="PIRSF" id="PIRSF009554">
    <property type="entry name" value="UCP009554"/>
    <property type="match status" value="1"/>
</dbReference>
<dbReference type="SUPFAM" id="SSF50475">
    <property type="entry name" value="FMN-binding split barrel"/>
    <property type="match status" value="1"/>
</dbReference>
<name>Y4548_CITK8</name>
<accession>A8AQ39</accession>
<feature type="chain" id="PRO_1000046775" description="UPF0306 protein CKO_04548">
    <location>
        <begin position="1"/>
        <end position="146"/>
    </location>
</feature>
<organism>
    <name type="scientific">Citrobacter koseri (strain ATCC BAA-895 / CDC 4225-83 / SGSC4696)</name>
    <dbReference type="NCBI Taxonomy" id="290338"/>
    <lineage>
        <taxon>Bacteria</taxon>
        <taxon>Pseudomonadati</taxon>
        <taxon>Pseudomonadota</taxon>
        <taxon>Gammaproteobacteria</taxon>
        <taxon>Enterobacterales</taxon>
        <taxon>Enterobacteriaceae</taxon>
        <taxon>Citrobacter</taxon>
    </lineage>
</organism>
<evidence type="ECO:0000255" key="1">
    <source>
        <dbReference type="HAMAP-Rule" id="MF_00764"/>
    </source>
</evidence>
<reference key="1">
    <citation type="submission" date="2007-08" db="EMBL/GenBank/DDBJ databases">
        <authorList>
            <consortium name="The Citrobacter koseri Genome Sequencing Project"/>
            <person name="McClelland M."/>
            <person name="Sanderson E.K."/>
            <person name="Porwollik S."/>
            <person name="Spieth J."/>
            <person name="Clifton W.S."/>
            <person name="Latreille P."/>
            <person name="Courtney L."/>
            <person name="Wang C."/>
            <person name="Pepin K."/>
            <person name="Bhonagiri V."/>
            <person name="Nash W."/>
            <person name="Johnson M."/>
            <person name="Thiruvilangam P."/>
            <person name="Wilson R."/>
        </authorList>
    </citation>
    <scope>NUCLEOTIDE SEQUENCE [LARGE SCALE GENOMIC DNA]</scope>
    <source>
        <strain>ATCC BAA-895 / CDC 4225-83 / SGSC4696</strain>
    </source>
</reference>
<keyword id="KW-1185">Reference proteome</keyword>